<comment type="function">
    <text evidence="1">ATPase subunit of a proteasome-like degradation complex; this subunit has chaperone activity. The binding of ATP and its subsequent hydrolysis by HslU are essential for unfolding of protein substrates subsequently hydrolyzed by HslV. HslU recognizes the N-terminal part of its protein substrates and unfolds these before they are guided to HslV for hydrolysis.</text>
</comment>
<comment type="subunit">
    <text evidence="1">A double ring-shaped homohexamer of HslV is capped on each side by a ring-shaped HslU homohexamer. The assembly of the HslU/HslV complex is dependent on binding of ATP.</text>
</comment>
<comment type="subcellular location">
    <subcellularLocation>
        <location evidence="1">Cytoplasm</location>
    </subcellularLocation>
</comment>
<comment type="similarity">
    <text evidence="1">Belongs to the ClpX chaperone family. HslU subfamily.</text>
</comment>
<feature type="chain" id="PRO_0000160504" description="ATP-dependent protease ATPase subunit HslU">
    <location>
        <begin position="1"/>
        <end position="443"/>
    </location>
</feature>
<feature type="binding site" evidence="1">
    <location>
        <position position="18"/>
    </location>
    <ligand>
        <name>ATP</name>
        <dbReference type="ChEBI" id="CHEBI:30616"/>
    </ligand>
</feature>
<feature type="binding site" evidence="1">
    <location>
        <begin position="60"/>
        <end position="65"/>
    </location>
    <ligand>
        <name>ATP</name>
        <dbReference type="ChEBI" id="CHEBI:30616"/>
    </ligand>
</feature>
<feature type="binding site" evidence="1">
    <location>
        <position position="256"/>
    </location>
    <ligand>
        <name>ATP</name>
        <dbReference type="ChEBI" id="CHEBI:30616"/>
    </ligand>
</feature>
<feature type="binding site" evidence="1">
    <location>
        <position position="321"/>
    </location>
    <ligand>
        <name>ATP</name>
        <dbReference type="ChEBI" id="CHEBI:30616"/>
    </ligand>
</feature>
<feature type="binding site" evidence="1">
    <location>
        <position position="393"/>
    </location>
    <ligand>
        <name>ATP</name>
        <dbReference type="ChEBI" id="CHEBI:30616"/>
    </ligand>
</feature>
<organism>
    <name type="scientific">Pectobacterium atrosepticum (strain SCRI 1043 / ATCC BAA-672)</name>
    <name type="common">Erwinia carotovora subsp. atroseptica</name>
    <dbReference type="NCBI Taxonomy" id="218491"/>
    <lineage>
        <taxon>Bacteria</taxon>
        <taxon>Pseudomonadati</taxon>
        <taxon>Pseudomonadota</taxon>
        <taxon>Gammaproteobacteria</taxon>
        <taxon>Enterobacterales</taxon>
        <taxon>Pectobacteriaceae</taxon>
        <taxon>Pectobacterium</taxon>
    </lineage>
</organism>
<gene>
    <name evidence="1" type="primary">hslU</name>
    <name type="ordered locus">ECA4262</name>
</gene>
<proteinExistence type="inferred from homology"/>
<accession>Q6CZ91</accession>
<keyword id="KW-0067">ATP-binding</keyword>
<keyword id="KW-0143">Chaperone</keyword>
<keyword id="KW-0963">Cytoplasm</keyword>
<keyword id="KW-0547">Nucleotide-binding</keyword>
<keyword id="KW-1185">Reference proteome</keyword>
<protein>
    <recommendedName>
        <fullName evidence="1">ATP-dependent protease ATPase subunit HslU</fullName>
    </recommendedName>
    <alternativeName>
        <fullName evidence="1">Unfoldase HslU</fullName>
    </alternativeName>
</protein>
<sequence>MSEMTPREIVSELDSYIIGQHKAKRAVSIALRNRWRRMQLDEALRHEVTPKNILMIGPTGVGKTEIARRLAKLANAPFIKVEATKFTEVGYVGKEVDSIIRDLTDSAIKMVRHQSIEKNRFRAEEMAEDRILDVLIPPAKNNWGQAEGTQEPSATRQAFRKKLREGQLDDKEIEIDLAASPVGVEIMAPPGMEEMTNQLQSMFQNLAGQKQKAHKVKIKDAFKLLIEEEAAKLVNPEELKQQAIEAVEQHGIVFIDEIDKICKRGESSGPDVSREGVQRDLLPLVEGCTVSTKHGMVKTDHILFIASGAFQVASPSDLIPELQGRLPIRVELQALTTEDFERILTEPSASLTEQYKALMATEGVDISFTADGIRRIAEAAWQVNESTENIGARRLHTVMERLIEDVSYDASEMNGQSVIIDADYVRSHLDELVADEDLSRFIL</sequence>
<name>HSLU_PECAS</name>
<dbReference type="EMBL" id="BX950851">
    <property type="protein sequence ID" value="CAG77159.1"/>
    <property type="molecule type" value="Genomic_DNA"/>
</dbReference>
<dbReference type="RefSeq" id="WP_011095731.1">
    <property type="nucleotide sequence ID" value="NC_004547.2"/>
</dbReference>
<dbReference type="SMR" id="Q6CZ91"/>
<dbReference type="STRING" id="218491.ECA4262"/>
<dbReference type="GeneID" id="57210934"/>
<dbReference type="KEGG" id="eca:ECA4262"/>
<dbReference type="PATRIC" id="fig|218491.5.peg.4339"/>
<dbReference type="eggNOG" id="COG1220">
    <property type="taxonomic scope" value="Bacteria"/>
</dbReference>
<dbReference type="HOGENOM" id="CLU_033123_0_0_6"/>
<dbReference type="OrthoDB" id="9804062at2"/>
<dbReference type="Proteomes" id="UP000007966">
    <property type="component" value="Chromosome"/>
</dbReference>
<dbReference type="GO" id="GO:0009376">
    <property type="term" value="C:HslUV protease complex"/>
    <property type="evidence" value="ECO:0007669"/>
    <property type="project" value="UniProtKB-UniRule"/>
</dbReference>
<dbReference type="GO" id="GO:0005524">
    <property type="term" value="F:ATP binding"/>
    <property type="evidence" value="ECO:0007669"/>
    <property type="project" value="UniProtKB-UniRule"/>
</dbReference>
<dbReference type="GO" id="GO:0016887">
    <property type="term" value="F:ATP hydrolysis activity"/>
    <property type="evidence" value="ECO:0007669"/>
    <property type="project" value="InterPro"/>
</dbReference>
<dbReference type="GO" id="GO:0008233">
    <property type="term" value="F:peptidase activity"/>
    <property type="evidence" value="ECO:0007669"/>
    <property type="project" value="InterPro"/>
</dbReference>
<dbReference type="GO" id="GO:0036402">
    <property type="term" value="F:proteasome-activating activity"/>
    <property type="evidence" value="ECO:0007669"/>
    <property type="project" value="UniProtKB-UniRule"/>
</dbReference>
<dbReference type="GO" id="GO:0043335">
    <property type="term" value="P:protein unfolding"/>
    <property type="evidence" value="ECO:0007669"/>
    <property type="project" value="UniProtKB-UniRule"/>
</dbReference>
<dbReference type="GO" id="GO:0051603">
    <property type="term" value="P:proteolysis involved in protein catabolic process"/>
    <property type="evidence" value="ECO:0007669"/>
    <property type="project" value="TreeGrafter"/>
</dbReference>
<dbReference type="CDD" id="cd19498">
    <property type="entry name" value="RecA-like_HslU"/>
    <property type="match status" value="1"/>
</dbReference>
<dbReference type="FunFam" id="1.10.8.10:FF:000028">
    <property type="entry name" value="ATP-dependent protease ATPase subunit HslU"/>
    <property type="match status" value="2"/>
</dbReference>
<dbReference type="FunFam" id="1.10.8.60:FF:000027">
    <property type="entry name" value="ATP-dependent protease ATPase subunit HslU"/>
    <property type="match status" value="1"/>
</dbReference>
<dbReference type="FunFam" id="3.40.50.300:FF:000213">
    <property type="entry name" value="ATP-dependent protease ATPase subunit HslU"/>
    <property type="match status" value="1"/>
</dbReference>
<dbReference type="FunFam" id="3.40.50.300:FF:000220">
    <property type="entry name" value="ATP-dependent protease ATPase subunit HslU"/>
    <property type="match status" value="1"/>
</dbReference>
<dbReference type="Gene3D" id="1.10.8.60">
    <property type="match status" value="1"/>
</dbReference>
<dbReference type="Gene3D" id="1.10.8.10">
    <property type="entry name" value="DNA helicase RuvA subunit, C-terminal domain"/>
    <property type="match status" value="1"/>
</dbReference>
<dbReference type="Gene3D" id="3.40.50.300">
    <property type="entry name" value="P-loop containing nucleotide triphosphate hydrolases"/>
    <property type="match status" value="2"/>
</dbReference>
<dbReference type="HAMAP" id="MF_00249">
    <property type="entry name" value="HslU"/>
    <property type="match status" value="1"/>
</dbReference>
<dbReference type="InterPro" id="IPR003593">
    <property type="entry name" value="AAA+_ATPase"/>
</dbReference>
<dbReference type="InterPro" id="IPR050052">
    <property type="entry name" value="ATP-dep_Clp_protease_ClpX"/>
</dbReference>
<dbReference type="InterPro" id="IPR003959">
    <property type="entry name" value="ATPase_AAA_core"/>
</dbReference>
<dbReference type="InterPro" id="IPR019489">
    <property type="entry name" value="Clp_ATPase_C"/>
</dbReference>
<dbReference type="InterPro" id="IPR004491">
    <property type="entry name" value="HslU"/>
</dbReference>
<dbReference type="InterPro" id="IPR027417">
    <property type="entry name" value="P-loop_NTPase"/>
</dbReference>
<dbReference type="NCBIfam" id="TIGR00390">
    <property type="entry name" value="hslU"/>
    <property type="match status" value="1"/>
</dbReference>
<dbReference type="NCBIfam" id="NF003544">
    <property type="entry name" value="PRK05201.1"/>
    <property type="match status" value="1"/>
</dbReference>
<dbReference type="PANTHER" id="PTHR48102">
    <property type="entry name" value="ATP-DEPENDENT CLP PROTEASE ATP-BINDING SUBUNIT CLPX-LIKE, MITOCHONDRIAL-RELATED"/>
    <property type="match status" value="1"/>
</dbReference>
<dbReference type="PANTHER" id="PTHR48102:SF3">
    <property type="entry name" value="ATP-DEPENDENT PROTEASE ATPASE SUBUNIT HSLU"/>
    <property type="match status" value="1"/>
</dbReference>
<dbReference type="Pfam" id="PF00004">
    <property type="entry name" value="AAA"/>
    <property type="match status" value="1"/>
</dbReference>
<dbReference type="Pfam" id="PF07724">
    <property type="entry name" value="AAA_2"/>
    <property type="match status" value="1"/>
</dbReference>
<dbReference type="SMART" id="SM00382">
    <property type="entry name" value="AAA"/>
    <property type="match status" value="1"/>
</dbReference>
<dbReference type="SMART" id="SM01086">
    <property type="entry name" value="ClpB_D2-small"/>
    <property type="match status" value="1"/>
</dbReference>
<dbReference type="SUPFAM" id="SSF52540">
    <property type="entry name" value="P-loop containing nucleoside triphosphate hydrolases"/>
    <property type="match status" value="1"/>
</dbReference>
<evidence type="ECO:0000255" key="1">
    <source>
        <dbReference type="HAMAP-Rule" id="MF_00249"/>
    </source>
</evidence>
<reference key="1">
    <citation type="journal article" date="2004" name="Proc. Natl. Acad. Sci. U.S.A.">
        <title>Genome sequence of the enterobacterial phytopathogen Erwinia carotovora subsp. atroseptica and characterization of virulence factors.</title>
        <authorList>
            <person name="Bell K.S."/>
            <person name="Sebaihia M."/>
            <person name="Pritchard L."/>
            <person name="Holden M.T.G."/>
            <person name="Hyman L.J."/>
            <person name="Holeva M.C."/>
            <person name="Thomson N.R."/>
            <person name="Bentley S.D."/>
            <person name="Churcher L.J.C."/>
            <person name="Mungall K."/>
            <person name="Atkin R."/>
            <person name="Bason N."/>
            <person name="Brooks K."/>
            <person name="Chillingworth T."/>
            <person name="Clark K."/>
            <person name="Doggett J."/>
            <person name="Fraser A."/>
            <person name="Hance Z."/>
            <person name="Hauser H."/>
            <person name="Jagels K."/>
            <person name="Moule S."/>
            <person name="Norbertczak H."/>
            <person name="Ormond D."/>
            <person name="Price C."/>
            <person name="Quail M.A."/>
            <person name="Sanders M."/>
            <person name="Walker D."/>
            <person name="Whitehead S."/>
            <person name="Salmond G.P.C."/>
            <person name="Birch P.R.J."/>
            <person name="Parkhill J."/>
            <person name="Toth I.K."/>
        </authorList>
    </citation>
    <scope>NUCLEOTIDE SEQUENCE [LARGE SCALE GENOMIC DNA]</scope>
    <source>
        <strain>SCRI 1043 / ATCC BAA-672</strain>
    </source>
</reference>